<sequence length="296" mass="32782">MGHLAILFSIIAVLNIATAVASSDSIYLKGHRVGQDIDSLYRVYDNGTMYPVTFNEWLNDLTGMNDLATNNATILKRDSSDVSCVTETCQYVDYHVDDEGVITIDISTYRIPVEWDSGSAGNASYGVSKRDTKYETFCKKKICGINVSGFCNAYDFAVHAFDFGGSVYNPVSGITDRIKEATKRDKTECLGYELDHVRIDPAVDWSISISTWKQGSANCDTQASADSLKCAAQKALESEHNHQKTAFCIHLDNGGSFNLDIRLISELSFSKYNPWALPCPKYKGSNSWQVVSDCFQ</sequence>
<dbReference type="EMBL" id="D00905">
    <property type="protein sequence ID" value="BAA00751.1"/>
    <property type="molecule type" value="Genomic_DNA"/>
</dbReference>
<dbReference type="PIR" id="JT0548">
    <property type="entry name" value="JT0548"/>
</dbReference>
<dbReference type="GlyCosmos" id="P22313">
    <property type="glycosylation" value="4 sites, No reported glycans"/>
</dbReference>
<dbReference type="SGD" id="S000029237">
    <property type="gene designation" value="KHR1"/>
</dbReference>
<dbReference type="VEuPathDB" id="FungiDB:YER076C"/>
<dbReference type="GO" id="GO:0005576">
    <property type="term" value="C:extracellular region"/>
    <property type="evidence" value="ECO:0000314"/>
    <property type="project" value="SGD"/>
</dbReference>
<dbReference type="GO" id="GO:0090729">
    <property type="term" value="F:toxin activity"/>
    <property type="evidence" value="ECO:0007669"/>
    <property type="project" value="UniProtKB-KW"/>
</dbReference>
<organism>
    <name type="scientific">Saccharomyces cerevisiae</name>
    <name type="common">Baker's yeast</name>
    <dbReference type="NCBI Taxonomy" id="4932"/>
    <lineage>
        <taxon>Eukaryota</taxon>
        <taxon>Fungi</taxon>
        <taxon>Dikarya</taxon>
        <taxon>Ascomycota</taxon>
        <taxon>Saccharomycotina</taxon>
        <taxon>Saccharomycetes</taxon>
        <taxon>Saccharomycetales</taxon>
        <taxon>Saccharomycetaceae</taxon>
        <taxon>Saccharomyces</taxon>
    </lineage>
</organism>
<reference key="1">
    <citation type="journal article" date="1990" name="Agric. Biol. Chem.">
        <title>Cloning and nucleotide sequence of the KHR killer gene of Saccharomyces cerevisiae.</title>
        <authorList>
            <person name="Goto K."/>
            <person name="Iwatuki Y."/>
            <person name="Kitano K."/>
            <person name="Obata T."/>
            <person name="Hara S."/>
        </authorList>
    </citation>
    <scope>NUCLEOTIDE SEQUENCE [GENOMIC DNA]</scope>
    <source>
        <strain>18 rho(-)</strain>
    </source>
</reference>
<feature type="signal peptide" evidence="1">
    <location>
        <begin position="1"/>
        <end position="20"/>
    </location>
</feature>
<feature type="chain" id="PRO_0000021541" description="Killer toxin KHR">
    <location>
        <begin position="21"/>
        <end position="296"/>
    </location>
</feature>
<feature type="glycosylation site" description="N-linked (GlcNAc...) asparagine" evidence="1">
    <location>
        <position position="46"/>
    </location>
</feature>
<feature type="glycosylation site" description="N-linked (GlcNAc...) asparagine" evidence="1">
    <location>
        <position position="71"/>
    </location>
</feature>
<feature type="glycosylation site" description="N-linked (GlcNAc...) asparagine" evidence="1">
    <location>
        <position position="122"/>
    </location>
</feature>
<feature type="glycosylation site" description="N-linked (GlcNAc...) asparagine" evidence="1">
    <location>
        <position position="146"/>
    </location>
</feature>
<protein>
    <recommendedName>
        <fullName>Killer toxin KHR</fullName>
    </recommendedName>
    <alternativeName>
        <fullName>Killer of heat resistant</fullName>
    </alternativeName>
</protein>
<comment type="function">
    <text>Kills sensitive strains of yeast.</text>
</comment>
<comment type="similarity">
    <text evidence="2">To yeast YER076C.</text>
</comment>
<accession>P22313</accession>
<proteinExistence type="inferred from homology"/>
<evidence type="ECO:0000255" key="1"/>
<evidence type="ECO:0000305" key="2"/>
<name>KHR1_YEASX</name>
<keyword id="KW-0325">Glycoprotein</keyword>
<keyword id="KW-0732">Signal</keyword>
<keyword id="KW-0800">Toxin</keyword>
<gene>
    <name type="primary">KHR1</name>
    <name type="synonym">KHR</name>
</gene>